<sequence length="160" mass="18274">MGKSHGYRSRTRYMFQRDFRKHGAVHMSTYLKIYKVGDIVDIKANGSIQKGMPHKFYQGKTGVVYNVTKSSVGVIINKMVGNRYLEKRLNLRVEHIKHSKCRQEFLERVKANAAKRAEAKAQGVAVQLKRQPAQPRESRIVSTEGNVPQTLAPVPYETFI</sequence>
<comment type="function">
    <text evidence="7">Component of the ribosome, a large ribonucleoprotein complex responsible for the synthesis of proteins in the cell. The small ribosomal subunit (SSU) binds messenger RNAs (mRNAs) and translates the encoded message by selecting cognate aminoacyl-transfer RNA (tRNA) molecules. The large subunit (LSU) contains the ribosomal catalytic site termed the peptidyl transferase center (PTC), which catalyzes the formation of peptide bonds, thereby polymerizing the amino acids delivered by tRNAs into a polypeptide chain. The nascent polypeptides leave the ribosome through a tunnel in the LSU and interact with protein factors that function in enzymatic processing, targeting, and the membrane insertion of nascent chains at the exit of the ribosomal tunnel.</text>
</comment>
<comment type="subunit">
    <text evidence="3 8">Component of the large ribosomal subunit (LSU). Mature yeast ribosomes consist of a small (40S) and a large (60S) subunit. The 40S small subunit contains 1 molecule of ribosomal RNA (18S rRNA) and 33 different proteins (encoded by 57 genes). The large 60S subunit contains 3 rRNA molecules (25S, 5.8S and 5S rRNA) and 46 different proteins (encoded by 81 genes) (PubMed:22096102, PubMed:9559554).</text>
</comment>
<comment type="subcellular location">
    <subcellularLocation>
        <location evidence="1 3">Cytoplasm</location>
    </subcellularLocation>
</comment>
<comment type="miscellaneous">
    <text evidence="2 3">Present with 66400 molecules/cell in log phase SD medium.</text>
</comment>
<comment type="miscellaneous">
    <text evidence="6">There are 2 genes for eL21 in yeast.</text>
</comment>
<comment type="similarity">
    <text evidence="6">Belongs to the eukaryotic ribosomal protein eL21 family.</text>
</comment>
<reference key="1">
    <citation type="journal article" date="1997" name="Nature">
        <title>The nucleotide sequence of Saccharomyces cerevisiae chromosome XVI.</title>
        <authorList>
            <person name="Bussey H."/>
            <person name="Storms R.K."/>
            <person name="Ahmed A."/>
            <person name="Albermann K."/>
            <person name="Allen E."/>
            <person name="Ansorge W."/>
            <person name="Araujo R."/>
            <person name="Aparicio A."/>
            <person name="Barrell B.G."/>
            <person name="Badcock K."/>
            <person name="Benes V."/>
            <person name="Botstein D."/>
            <person name="Bowman S."/>
            <person name="Brueckner M."/>
            <person name="Carpenter J."/>
            <person name="Cherry J.M."/>
            <person name="Chung E."/>
            <person name="Churcher C.M."/>
            <person name="Coster F."/>
            <person name="Davis K."/>
            <person name="Davis R.W."/>
            <person name="Dietrich F.S."/>
            <person name="Delius H."/>
            <person name="DiPaolo T."/>
            <person name="Dubois E."/>
            <person name="Duesterhoeft A."/>
            <person name="Duncan M."/>
            <person name="Floeth M."/>
            <person name="Fortin N."/>
            <person name="Friesen J.D."/>
            <person name="Fritz C."/>
            <person name="Goffeau A."/>
            <person name="Hall J."/>
            <person name="Hebling U."/>
            <person name="Heumann K."/>
            <person name="Hilbert H."/>
            <person name="Hillier L.W."/>
            <person name="Hunicke-Smith S."/>
            <person name="Hyman R.W."/>
            <person name="Johnston M."/>
            <person name="Kalman S."/>
            <person name="Kleine K."/>
            <person name="Komp C."/>
            <person name="Kurdi O."/>
            <person name="Lashkari D."/>
            <person name="Lew H."/>
            <person name="Lin A."/>
            <person name="Lin D."/>
            <person name="Louis E.J."/>
            <person name="Marathe R."/>
            <person name="Messenguy F."/>
            <person name="Mewes H.-W."/>
            <person name="Mirtipati S."/>
            <person name="Moestl D."/>
            <person name="Mueller-Auer S."/>
            <person name="Namath A."/>
            <person name="Nentwich U."/>
            <person name="Oefner P."/>
            <person name="Pearson D."/>
            <person name="Petel F.X."/>
            <person name="Pohl T.M."/>
            <person name="Purnelle B."/>
            <person name="Rajandream M.A."/>
            <person name="Rechmann S."/>
            <person name="Rieger M."/>
            <person name="Riles L."/>
            <person name="Roberts D."/>
            <person name="Schaefer M."/>
            <person name="Scharfe M."/>
            <person name="Scherens B."/>
            <person name="Schramm S."/>
            <person name="Schroeder M."/>
            <person name="Sdicu A.-M."/>
            <person name="Tettelin H."/>
            <person name="Urrestarazu L.A."/>
            <person name="Ushinsky S."/>
            <person name="Vierendeels F."/>
            <person name="Vissers S."/>
            <person name="Voss H."/>
            <person name="Walsh S.V."/>
            <person name="Wambutt R."/>
            <person name="Wang Y."/>
            <person name="Wedler E."/>
            <person name="Wedler H."/>
            <person name="Winnett E."/>
            <person name="Zhong W.-W."/>
            <person name="Zollner A."/>
            <person name="Vo D.H."/>
            <person name="Hani J."/>
        </authorList>
    </citation>
    <scope>NUCLEOTIDE SEQUENCE [LARGE SCALE GENOMIC DNA]</scope>
    <source>
        <strain>ATCC 204508 / S288c</strain>
    </source>
</reference>
<reference key="2">
    <citation type="journal article" date="2014" name="G3 (Bethesda)">
        <title>The reference genome sequence of Saccharomyces cerevisiae: Then and now.</title>
        <authorList>
            <person name="Engel S.R."/>
            <person name="Dietrich F.S."/>
            <person name="Fisk D.G."/>
            <person name="Binkley G."/>
            <person name="Balakrishnan R."/>
            <person name="Costanzo M.C."/>
            <person name="Dwight S.S."/>
            <person name="Hitz B.C."/>
            <person name="Karra K."/>
            <person name="Nash R.S."/>
            <person name="Weng S."/>
            <person name="Wong E.D."/>
            <person name="Lloyd P."/>
            <person name="Skrzypek M.S."/>
            <person name="Miyasato S.R."/>
            <person name="Simison M."/>
            <person name="Cherry J.M."/>
        </authorList>
    </citation>
    <scope>GENOME REANNOTATION</scope>
    <source>
        <strain>ATCC 204508 / S288c</strain>
    </source>
</reference>
<reference key="3">
    <citation type="journal article" date="1998" name="Yeast">
        <title>The list of cytoplasmic ribosomal proteins of Saccharomyces cerevisiae.</title>
        <authorList>
            <person name="Planta R.J."/>
            <person name="Mager W.H."/>
        </authorList>
    </citation>
    <scope>NOMENCLATURE</scope>
    <scope>SUBUNIT</scope>
</reference>
<reference key="4">
    <citation type="journal article" date="2003" name="Nature">
        <title>Global analysis of protein localization in budding yeast.</title>
        <authorList>
            <person name="Huh W.-K."/>
            <person name="Falvo J.V."/>
            <person name="Gerke L.C."/>
            <person name="Carroll A.S."/>
            <person name="Howson R.W."/>
            <person name="Weissman J.S."/>
            <person name="O'Shea E.K."/>
        </authorList>
    </citation>
    <scope>SUBCELLULAR LOCATION [LARGE SCALE ANALYSIS]</scope>
</reference>
<reference key="5">
    <citation type="journal article" date="2003" name="Nature">
        <title>Global analysis of protein expression in yeast.</title>
        <authorList>
            <person name="Ghaemmaghami S."/>
            <person name="Huh W.-K."/>
            <person name="Bower K."/>
            <person name="Howson R.W."/>
            <person name="Belle A."/>
            <person name="Dephoure N."/>
            <person name="O'Shea E.K."/>
            <person name="Weissman J.S."/>
        </authorList>
    </citation>
    <scope>LEVEL OF PROTEIN EXPRESSION [LARGE SCALE ANALYSIS]</scope>
</reference>
<reference key="6">
    <citation type="journal article" date="2011" name="Science">
        <title>The structure of the eukaryotic ribosome at 3.0 A resolution.</title>
        <authorList>
            <person name="Ben-Shem A."/>
            <person name="Garreau de Loubresse N."/>
            <person name="Melnikov S."/>
            <person name="Jenner L."/>
            <person name="Yusupova G."/>
            <person name="Yusupov M."/>
        </authorList>
    </citation>
    <scope>SUBUNIT</scope>
    <scope>SUBCELLULAR LOCATION</scope>
</reference>
<reference key="7">
    <citation type="journal article" date="2012" name="Proteomics">
        <title>Sites of ubiquitin attachment in Saccharomyces cerevisiae.</title>
        <authorList>
            <person name="Starita L.M."/>
            <person name="Lo R.S."/>
            <person name="Eng J.K."/>
            <person name="von Haller P.D."/>
            <person name="Fields S."/>
        </authorList>
    </citation>
    <scope>UBIQUITINATION [LARGE SCALE ANALYSIS] AT LYS-32</scope>
    <scope>IDENTIFICATION BY MASS SPECTROMETRY [LARGE SCALE ANALYSIS]</scope>
</reference>
<reference key="8">
    <citation type="journal article" date="2014" name="Curr. Opin. Struct. Biol.">
        <title>A new system for naming ribosomal proteins.</title>
        <authorList>
            <person name="Ban N."/>
            <person name="Beckmann R."/>
            <person name="Cate J.H.D."/>
            <person name="Dinman J.D."/>
            <person name="Dragon F."/>
            <person name="Ellis S.R."/>
            <person name="Lafontaine D.L.J."/>
            <person name="Lindahl L."/>
            <person name="Liljas A."/>
            <person name="Lipton J.M."/>
            <person name="McAlear M.A."/>
            <person name="Moore P.B."/>
            <person name="Noller H.F."/>
            <person name="Ortega J."/>
            <person name="Panse V.G."/>
            <person name="Ramakrishnan V."/>
            <person name="Spahn C.M.T."/>
            <person name="Steitz T.A."/>
            <person name="Tchorzewski M."/>
            <person name="Tollervey D."/>
            <person name="Warren A.J."/>
            <person name="Williamson J.R."/>
            <person name="Wilson D."/>
            <person name="Yonath A."/>
            <person name="Yusupov M."/>
        </authorList>
    </citation>
    <scope>NOMENCLATURE</scope>
</reference>
<accession>Q12672</accession>
<accession>D6W3T7</accession>
<protein>
    <recommendedName>
        <fullName evidence="4">Large ribosomal subunit protein eL21B</fullName>
    </recommendedName>
    <alternativeName>
        <fullName evidence="5">60S ribosomal protein L21-B</fullName>
    </alternativeName>
</protein>
<evidence type="ECO:0000269" key="1">
    <source>
    </source>
</evidence>
<evidence type="ECO:0000269" key="2">
    <source>
    </source>
</evidence>
<evidence type="ECO:0000269" key="3">
    <source>
    </source>
</evidence>
<evidence type="ECO:0000303" key="4">
    <source>
    </source>
</evidence>
<evidence type="ECO:0000303" key="5">
    <source>
    </source>
</evidence>
<evidence type="ECO:0000305" key="6"/>
<evidence type="ECO:0000305" key="7">
    <source>
    </source>
</evidence>
<evidence type="ECO:0000305" key="8">
    <source>
    </source>
</evidence>
<evidence type="ECO:0007744" key="9">
    <source>
    </source>
</evidence>
<dbReference type="EMBL" id="U41849">
    <property type="protein sequence ID" value="AAB68259.1"/>
    <property type="molecule type" value="Genomic_DNA"/>
</dbReference>
<dbReference type="EMBL" id="BK006949">
    <property type="protein sequence ID" value="DAA11353.1"/>
    <property type="molecule type" value="Genomic_DNA"/>
</dbReference>
<dbReference type="PIR" id="S61108">
    <property type="entry name" value="S61108"/>
</dbReference>
<dbReference type="RefSeq" id="NP_015246.1">
    <property type="nucleotide sequence ID" value="NM_001183893.1"/>
</dbReference>
<dbReference type="SMR" id="Q12672"/>
<dbReference type="BioGRID" id="36101">
    <property type="interactions" value="407"/>
</dbReference>
<dbReference type="ComplexPortal" id="CPX-1601">
    <property type="entry name" value="60S cytosolic large ribosomal subunit"/>
</dbReference>
<dbReference type="FunCoup" id="Q12672">
    <property type="interactions" value="952"/>
</dbReference>
<dbReference type="IntAct" id="Q12672">
    <property type="interactions" value="46"/>
</dbReference>
<dbReference type="STRING" id="4932.YPL079W"/>
<dbReference type="iPTMnet" id="Q12672"/>
<dbReference type="PaxDb" id="4932-YPL079W"/>
<dbReference type="PeptideAtlas" id="Q12672"/>
<dbReference type="EnsemblFungi" id="YPL079W_mRNA">
    <property type="protein sequence ID" value="YPL079W"/>
    <property type="gene ID" value="YPL079W"/>
</dbReference>
<dbReference type="GeneID" id="856026"/>
<dbReference type="KEGG" id="sce:YPL079W"/>
<dbReference type="AGR" id="SGD:S000006000"/>
<dbReference type="SGD" id="S000006000">
    <property type="gene designation" value="RPL21B"/>
</dbReference>
<dbReference type="VEuPathDB" id="FungiDB:YPL079W"/>
<dbReference type="eggNOG" id="KOG1732">
    <property type="taxonomic scope" value="Eukaryota"/>
</dbReference>
<dbReference type="GeneTree" id="ENSGT00950000182922"/>
<dbReference type="HOGENOM" id="CLU_103610_0_1_1"/>
<dbReference type="InParanoid" id="Q12672"/>
<dbReference type="OMA" id="HVQASRC"/>
<dbReference type="OrthoDB" id="1539250at2759"/>
<dbReference type="BioCyc" id="YEAST:G3O-33986-MONOMER"/>
<dbReference type="BioGRID-ORCS" id="856026">
    <property type="hits" value="7 hits in 10 CRISPR screens"/>
</dbReference>
<dbReference type="PRO" id="PR:Q12672"/>
<dbReference type="Proteomes" id="UP000002311">
    <property type="component" value="Chromosome XVI"/>
</dbReference>
<dbReference type="RNAct" id="Q12672">
    <property type="molecule type" value="protein"/>
</dbReference>
<dbReference type="GO" id="GO:0005829">
    <property type="term" value="C:cytosol"/>
    <property type="evidence" value="ECO:0000304"/>
    <property type="project" value="Reactome"/>
</dbReference>
<dbReference type="GO" id="GO:0022625">
    <property type="term" value="C:cytosolic large ribosomal subunit"/>
    <property type="evidence" value="ECO:0000314"/>
    <property type="project" value="SGD"/>
</dbReference>
<dbReference type="GO" id="GO:0003735">
    <property type="term" value="F:structural constituent of ribosome"/>
    <property type="evidence" value="ECO:0000318"/>
    <property type="project" value="GO_Central"/>
</dbReference>
<dbReference type="GO" id="GO:0002181">
    <property type="term" value="P:cytoplasmic translation"/>
    <property type="evidence" value="ECO:0000305"/>
    <property type="project" value="SGD"/>
</dbReference>
<dbReference type="FunFam" id="2.30.30.70:FF:000001">
    <property type="entry name" value="60S ribosomal protein L21"/>
    <property type="match status" value="1"/>
</dbReference>
<dbReference type="FunFam" id="6.10.250.3260:FF:000001">
    <property type="entry name" value="60S ribosomal protein L21"/>
    <property type="match status" value="1"/>
</dbReference>
<dbReference type="Gene3D" id="6.10.250.3260">
    <property type="match status" value="1"/>
</dbReference>
<dbReference type="Gene3D" id="2.30.30.70">
    <property type="entry name" value="Ribosomal protein L21"/>
    <property type="match status" value="1"/>
</dbReference>
<dbReference type="InterPro" id="IPR001147">
    <property type="entry name" value="Ribosomal_eL21"/>
</dbReference>
<dbReference type="InterPro" id="IPR018259">
    <property type="entry name" value="Ribosomal_eL21_CS"/>
</dbReference>
<dbReference type="InterPro" id="IPR036948">
    <property type="entry name" value="Ribosomal_eL21_sf"/>
</dbReference>
<dbReference type="InterPro" id="IPR008991">
    <property type="entry name" value="Translation_prot_SH3-like_sf"/>
</dbReference>
<dbReference type="PANTHER" id="PTHR20981">
    <property type="entry name" value="60S RIBOSOMAL PROTEIN L21"/>
    <property type="match status" value="1"/>
</dbReference>
<dbReference type="Pfam" id="PF01157">
    <property type="entry name" value="Ribosomal_L21e"/>
    <property type="match status" value="1"/>
</dbReference>
<dbReference type="SUPFAM" id="SSF50104">
    <property type="entry name" value="Translation proteins SH3-like domain"/>
    <property type="match status" value="1"/>
</dbReference>
<dbReference type="PROSITE" id="PS01171">
    <property type="entry name" value="RIBOSOMAL_L21E"/>
    <property type="match status" value="1"/>
</dbReference>
<organism>
    <name type="scientific">Saccharomyces cerevisiae (strain ATCC 204508 / S288c)</name>
    <name type="common">Baker's yeast</name>
    <dbReference type="NCBI Taxonomy" id="559292"/>
    <lineage>
        <taxon>Eukaryota</taxon>
        <taxon>Fungi</taxon>
        <taxon>Dikarya</taxon>
        <taxon>Ascomycota</taxon>
        <taxon>Saccharomycotina</taxon>
        <taxon>Saccharomycetes</taxon>
        <taxon>Saccharomycetales</taxon>
        <taxon>Saccharomycetaceae</taxon>
        <taxon>Saccharomyces</taxon>
    </lineage>
</organism>
<keyword id="KW-0963">Cytoplasm</keyword>
<keyword id="KW-1017">Isopeptide bond</keyword>
<keyword id="KW-1185">Reference proteome</keyword>
<keyword id="KW-0687">Ribonucleoprotein</keyword>
<keyword id="KW-0689">Ribosomal protein</keyword>
<keyword id="KW-0832">Ubl conjugation</keyword>
<proteinExistence type="evidence at protein level"/>
<feature type="chain" id="PRO_0000149683" description="Large ribosomal subunit protein eL21B">
    <location>
        <begin position="1"/>
        <end position="160"/>
    </location>
</feature>
<feature type="cross-link" description="Glycyl lysine isopeptide (Lys-Gly) (interchain with G-Cter in ubiquitin)" evidence="9">
    <location>
        <position position="32"/>
    </location>
</feature>
<gene>
    <name evidence="5" type="primary">RPL21B</name>
    <name type="ordered locus">YPL079W</name>
    <name type="ORF">LPF6W</name>
</gene>
<name>RL21B_YEAST</name>